<dbReference type="EC" id="2.7.8.7" evidence="1"/>
<dbReference type="EMBL" id="CP000774">
    <property type="protein sequence ID" value="ABS64479.1"/>
    <property type="molecule type" value="Genomic_DNA"/>
</dbReference>
<dbReference type="RefSeq" id="WP_012111795.1">
    <property type="nucleotide sequence ID" value="NC_009719.1"/>
</dbReference>
<dbReference type="SMR" id="A7HX46"/>
<dbReference type="STRING" id="402881.Plav_2872"/>
<dbReference type="KEGG" id="pla:Plav_2872"/>
<dbReference type="eggNOG" id="COG0736">
    <property type="taxonomic scope" value="Bacteria"/>
</dbReference>
<dbReference type="HOGENOM" id="CLU_089696_0_2_5"/>
<dbReference type="OrthoDB" id="517356at2"/>
<dbReference type="Proteomes" id="UP000006377">
    <property type="component" value="Chromosome"/>
</dbReference>
<dbReference type="GO" id="GO:0005737">
    <property type="term" value="C:cytoplasm"/>
    <property type="evidence" value="ECO:0007669"/>
    <property type="project" value="UniProtKB-SubCell"/>
</dbReference>
<dbReference type="GO" id="GO:0008897">
    <property type="term" value="F:holo-[acyl-carrier-protein] synthase activity"/>
    <property type="evidence" value="ECO:0007669"/>
    <property type="project" value="UniProtKB-UniRule"/>
</dbReference>
<dbReference type="GO" id="GO:0000287">
    <property type="term" value="F:magnesium ion binding"/>
    <property type="evidence" value="ECO:0007669"/>
    <property type="project" value="UniProtKB-UniRule"/>
</dbReference>
<dbReference type="GO" id="GO:0006633">
    <property type="term" value="P:fatty acid biosynthetic process"/>
    <property type="evidence" value="ECO:0007669"/>
    <property type="project" value="UniProtKB-UniRule"/>
</dbReference>
<dbReference type="Gene3D" id="3.90.470.20">
    <property type="entry name" value="4'-phosphopantetheinyl transferase domain"/>
    <property type="match status" value="1"/>
</dbReference>
<dbReference type="HAMAP" id="MF_00101">
    <property type="entry name" value="AcpS"/>
    <property type="match status" value="1"/>
</dbReference>
<dbReference type="InterPro" id="IPR008278">
    <property type="entry name" value="4-PPantetheinyl_Trfase_dom"/>
</dbReference>
<dbReference type="InterPro" id="IPR037143">
    <property type="entry name" value="4-PPantetheinyl_Trfase_dom_sf"/>
</dbReference>
<dbReference type="InterPro" id="IPR002582">
    <property type="entry name" value="ACPS"/>
</dbReference>
<dbReference type="InterPro" id="IPR004568">
    <property type="entry name" value="Ppantetheine-prot_Trfase_dom"/>
</dbReference>
<dbReference type="NCBIfam" id="TIGR00516">
    <property type="entry name" value="acpS"/>
    <property type="match status" value="1"/>
</dbReference>
<dbReference type="NCBIfam" id="TIGR00556">
    <property type="entry name" value="pantethn_trn"/>
    <property type="match status" value="1"/>
</dbReference>
<dbReference type="Pfam" id="PF01648">
    <property type="entry name" value="ACPS"/>
    <property type="match status" value="1"/>
</dbReference>
<dbReference type="SUPFAM" id="SSF56214">
    <property type="entry name" value="4'-phosphopantetheinyl transferase"/>
    <property type="match status" value="1"/>
</dbReference>
<proteinExistence type="inferred from homology"/>
<keyword id="KW-0963">Cytoplasm</keyword>
<keyword id="KW-0275">Fatty acid biosynthesis</keyword>
<keyword id="KW-0276">Fatty acid metabolism</keyword>
<keyword id="KW-0444">Lipid biosynthesis</keyword>
<keyword id="KW-0443">Lipid metabolism</keyword>
<keyword id="KW-0460">Magnesium</keyword>
<keyword id="KW-0479">Metal-binding</keyword>
<keyword id="KW-1185">Reference proteome</keyword>
<keyword id="KW-0808">Transferase</keyword>
<feature type="chain" id="PRO_1000071298" description="Holo-[acyl-carrier-protein] synthase">
    <location>
        <begin position="1"/>
        <end position="133"/>
    </location>
</feature>
<feature type="binding site" evidence="1">
    <location>
        <position position="8"/>
    </location>
    <ligand>
        <name>Mg(2+)</name>
        <dbReference type="ChEBI" id="CHEBI:18420"/>
    </ligand>
</feature>
<feature type="binding site" evidence="1">
    <location>
        <position position="57"/>
    </location>
    <ligand>
        <name>Mg(2+)</name>
        <dbReference type="ChEBI" id="CHEBI:18420"/>
    </ligand>
</feature>
<name>ACPS_PARL1</name>
<comment type="function">
    <text evidence="1">Transfers the 4'-phosphopantetheine moiety from coenzyme A to a Ser of acyl-carrier-protein.</text>
</comment>
<comment type="catalytic activity">
    <reaction evidence="1">
        <text>apo-[ACP] + CoA = holo-[ACP] + adenosine 3',5'-bisphosphate + H(+)</text>
        <dbReference type="Rhea" id="RHEA:12068"/>
        <dbReference type="Rhea" id="RHEA-COMP:9685"/>
        <dbReference type="Rhea" id="RHEA-COMP:9690"/>
        <dbReference type="ChEBI" id="CHEBI:15378"/>
        <dbReference type="ChEBI" id="CHEBI:29999"/>
        <dbReference type="ChEBI" id="CHEBI:57287"/>
        <dbReference type="ChEBI" id="CHEBI:58343"/>
        <dbReference type="ChEBI" id="CHEBI:64479"/>
        <dbReference type="EC" id="2.7.8.7"/>
    </reaction>
</comment>
<comment type="cofactor">
    <cofactor evidence="1">
        <name>Mg(2+)</name>
        <dbReference type="ChEBI" id="CHEBI:18420"/>
    </cofactor>
</comment>
<comment type="subcellular location">
    <subcellularLocation>
        <location evidence="1">Cytoplasm</location>
    </subcellularLocation>
</comment>
<comment type="similarity">
    <text evidence="1">Belongs to the P-Pant transferase superfamily. AcpS family.</text>
</comment>
<organism>
    <name type="scientific">Parvibaculum lavamentivorans (strain DS-1 / DSM 13023 / NCIMB 13966)</name>
    <dbReference type="NCBI Taxonomy" id="402881"/>
    <lineage>
        <taxon>Bacteria</taxon>
        <taxon>Pseudomonadati</taxon>
        <taxon>Pseudomonadota</taxon>
        <taxon>Alphaproteobacteria</taxon>
        <taxon>Hyphomicrobiales</taxon>
        <taxon>Parvibaculaceae</taxon>
        <taxon>Parvibaculum</taxon>
    </lineage>
</organism>
<reference key="1">
    <citation type="journal article" date="2011" name="Stand. Genomic Sci.">
        <title>Complete genome sequence of Parvibaculum lavamentivorans type strain (DS-1(T)).</title>
        <authorList>
            <person name="Schleheck D."/>
            <person name="Weiss M."/>
            <person name="Pitluck S."/>
            <person name="Bruce D."/>
            <person name="Land M.L."/>
            <person name="Han S."/>
            <person name="Saunders E."/>
            <person name="Tapia R."/>
            <person name="Detter C."/>
            <person name="Brettin T."/>
            <person name="Han J."/>
            <person name="Woyke T."/>
            <person name="Goodwin L."/>
            <person name="Pennacchio L."/>
            <person name="Nolan M."/>
            <person name="Cook A.M."/>
            <person name="Kjelleberg S."/>
            <person name="Thomas T."/>
        </authorList>
    </citation>
    <scope>NUCLEOTIDE SEQUENCE [LARGE SCALE GENOMIC DNA]</scope>
    <source>
        <strain>DS-1 / DSM 13023 / NCIMB 13966</strain>
    </source>
</reference>
<protein>
    <recommendedName>
        <fullName evidence="1">Holo-[acyl-carrier-protein] synthase</fullName>
        <shortName evidence="1">Holo-ACP synthase</shortName>
        <ecNumber evidence="1">2.7.8.7</ecNumber>
    </recommendedName>
    <alternativeName>
        <fullName evidence="1">4'-phosphopantetheinyl transferase AcpS</fullName>
    </alternativeName>
</protein>
<gene>
    <name evidence="1" type="primary">acpS</name>
    <name type="ordered locus">Plav_2872</name>
</gene>
<sequence>MIIGIGNDIIDIRRVQKTLDRFGDRFIERIFTEVEKAKSEGRRMRAASYAKRFAAKEACSKALGTGMRRGVFWKDMGVVNLRGGQPTMALTGGALERLKEMTPEGTEAVIHLTITDDHPQAQAFVIISVVPKP</sequence>
<evidence type="ECO:0000255" key="1">
    <source>
        <dbReference type="HAMAP-Rule" id="MF_00101"/>
    </source>
</evidence>
<accession>A7HX46</accession>